<gene>
    <name type="primary">dnaK</name>
    <name type="ordered locus">trd_1640</name>
</gene>
<name>DNAK_THERP</name>
<proteinExistence type="inferred from homology"/>
<dbReference type="EMBL" id="U80216">
    <property type="protein sequence ID" value="AAB41740.1"/>
    <property type="molecule type" value="Genomic_DNA"/>
</dbReference>
<dbReference type="EMBL" id="CP001275">
    <property type="protein sequence ID" value="ACM06374.1"/>
    <property type="molecule type" value="Genomic_DNA"/>
</dbReference>
<dbReference type="RefSeq" id="WP_015922585.1">
    <property type="nucleotide sequence ID" value="NC_011959.1"/>
</dbReference>
<dbReference type="SMR" id="P96133"/>
<dbReference type="STRING" id="309801.trd_1640"/>
<dbReference type="KEGG" id="tro:trd_1640"/>
<dbReference type="eggNOG" id="COG0443">
    <property type="taxonomic scope" value="Bacteria"/>
</dbReference>
<dbReference type="HOGENOM" id="CLU_005965_2_1_0"/>
<dbReference type="OrthoDB" id="9766019at2"/>
<dbReference type="Proteomes" id="UP000000447">
    <property type="component" value="Chromosome"/>
</dbReference>
<dbReference type="GO" id="GO:0005524">
    <property type="term" value="F:ATP binding"/>
    <property type="evidence" value="ECO:0007669"/>
    <property type="project" value="UniProtKB-UniRule"/>
</dbReference>
<dbReference type="GO" id="GO:0140662">
    <property type="term" value="F:ATP-dependent protein folding chaperone"/>
    <property type="evidence" value="ECO:0007669"/>
    <property type="project" value="InterPro"/>
</dbReference>
<dbReference type="GO" id="GO:0051082">
    <property type="term" value="F:unfolded protein binding"/>
    <property type="evidence" value="ECO:0007669"/>
    <property type="project" value="InterPro"/>
</dbReference>
<dbReference type="CDD" id="cd10234">
    <property type="entry name" value="ASKHA_NBD_HSP70_DnaK-like"/>
    <property type="match status" value="1"/>
</dbReference>
<dbReference type="FunFam" id="2.60.34.10:FF:000014">
    <property type="entry name" value="Chaperone protein DnaK HSP70"/>
    <property type="match status" value="1"/>
</dbReference>
<dbReference type="FunFam" id="1.20.1270.10:FF:000001">
    <property type="entry name" value="Molecular chaperone DnaK"/>
    <property type="match status" value="1"/>
</dbReference>
<dbReference type="FunFam" id="3.30.420.40:FF:000004">
    <property type="entry name" value="Molecular chaperone DnaK"/>
    <property type="match status" value="1"/>
</dbReference>
<dbReference type="FunFam" id="3.90.640.10:FF:000003">
    <property type="entry name" value="Molecular chaperone DnaK"/>
    <property type="match status" value="1"/>
</dbReference>
<dbReference type="Gene3D" id="1.20.1270.10">
    <property type="match status" value="1"/>
</dbReference>
<dbReference type="Gene3D" id="3.30.420.40">
    <property type="match status" value="2"/>
</dbReference>
<dbReference type="Gene3D" id="3.90.640.10">
    <property type="entry name" value="Actin, Chain A, domain 4"/>
    <property type="match status" value="1"/>
</dbReference>
<dbReference type="Gene3D" id="2.60.34.10">
    <property type="entry name" value="Substrate Binding Domain Of DNAk, Chain A, domain 1"/>
    <property type="match status" value="1"/>
</dbReference>
<dbReference type="HAMAP" id="MF_00332">
    <property type="entry name" value="DnaK"/>
    <property type="match status" value="1"/>
</dbReference>
<dbReference type="InterPro" id="IPR043129">
    <property type="entry name" value="ATPase_NBD"/>
</dbReference>
<dbReference type="InterPro" id="IPR012725">
    <property type="entry name" value="Chaperone_DnaK"/>
</dbReference>
<dbReference type="InterPro" id="IPR018181">
    <property type="entry name" value="Heat_shock_70_CS"/>
</dbReference>
<dbReference type="InterPro" id="IPR029048">
    <property type="entry name" value="HSP70_C_sf"/>
</dbReference>
<dbReference type="InterPro" id="IPR029047">
    <property type="entry name" value="HSP70_peptide-bd_sf"/>
</dbReference>
<dbReference type="InterPro" id="IPR013126">
    <property type="entry name" value="Hsp_70_fam"/>
</dbReference>
<dbReference type="NCBIfam" id="NF001413">
    <property type="entry name" value="PRK00290.1"/>
    <property type="match status" value="1"/>
</dbReference>
<dbReference type="NCBIfam" id="NF003520">
    <property type="entry name" value="PRK05183.1"/>
    <property type="match status" value="1"/>
</dbReference>
<dbReference type="NCBIfam" id="TIGR02350">
    <property type="entry name" value="prok_dnaK"/>
    <property type="match status" value="1"/>
</dbReference>
<dbReference type="PANTHER" id="PTHR19375">
    <property type="entry name" value="HEAT SHOCK PROTEIN 70KDA"/>
    <property type="match status" value="1"/>
</dbReference>
<dbReference type="Pfam" id="PF00012">
    <property type="entry name" value="HSP70"/>
    <property type="match status" value="1"/>
</dbReference>
<dbReference type="PRINTS" id="PR00301">
    <property type="entry name" value="HEATSHOCK70"/>
</dbReference>
<dbReference type="SUPFAM" id="SSF53067">
    <property type="entry name" value="Actin-like ATPase domain"/>
    <property type="match status" value="2"/>
</dbReference>
<dbReference type="SUPFAM" id="SSF100934">
    <property type="entry name" value="Heat shock protein 70kD (HSP70), C-terminal subdomain"/>
    <property type="match status" value="1"/>
</dbReference>
<dbReference type="SUPFAM" id="SSF100920">
    <property type="entry name" value="Heat shock protein 70kD (HSP70), peptide-binding domain"/>
    <property type="match status" value="1"/>
</dbReference>
<dbReference type="PROSITE" id="PS00297">
    <property type="entry name" value="HSP70_1"/>
    <property type="match status" value="1"/>
</dbReference>
<dbReference type="PROSITE" id="PS00329">
    <property type="entry name" value="HSP70_2"/>
    <property type="match status" value="1"/>
</dbReference>
<dbReference type="PROSITE" id="PS01036">
    <property type="entry name" value="HSP70_3"/>
    <property type="match status" value="1"/>
</dbReference>
<protein>
    <recommendedName>
        <fullName>Chaperone protein DnaK</fullName>
    </recommendedName>
    <alternativeName>
        <fullName>HSP70</fullName>
    </alternativeName>
    <alternativeName>
        <fullName>Heat shock 70 kDa protein</fullName>
    </alternativeName>
    <alternativeName>
        <fullName>Heat shock protein 70</fullName>
    </alternativeName>
</protein>
<keyword id="KW-0067">ATP-binding</keyword>
<keyword id="KW-0143">Chaperone</keyword>
<keyword id="KW-0547">Nucleotide-binding</keyword>
<keyword id="KW-0597">Phosphoprotein</keyword>
<keyword id="KW-1185">Reference proteome</keyword>
<keyword id="KW-0346">Stress response</keyword>
<sequence>MGRVIGIDLGTTNSVMAVIEGGEPVVIPNAEGERLTPSVVAITPTGERLVGRFAKRQAITNPENTIYSIKRFMGRRFDDPEVQRTIKLVPYQVRRAQNGGVEVKMGDRWYTPQEISAMILQKLKQDAEAYLGETVDKAVITVPAYFDDSQRNATKDAGRIAGLEVLRIINEPTASALAYGLDKKGEEKVAVYDLGGGTYDISILDISEGVFQVLATNGDTHLGGDDFDQRIIDWLCDEFKRETGIDLRQDRMALQRLKEAAEKAKIELSSVQQTEINLPFITADATGPKHLVKTLTRSKLEQLVADLVEKTIPPMEQALKDAGLSPRDVDEVVLVGGQTRMPLIQRKVQEFFGKEPHKGINPDEVVAIGAAIQAGVLAGEVKEVLLLDVTPLTLAIETLGGVATPIIPRNTTIPTRKSQIFTTASDNQTQVEIHVVQGERPMAADNKTLGRFILDGIPPAPRGVPKIEVTFDIDANGILTVSARDLATGREQKITITASTGLTEEEIQRMIREAEEHAEEDRRKREAIELRNQAEALLYQAEKTLNEFSDRIPSELKLELENKMQAVREIVERDPMNTARLRPAYDELARTLSQVGARMYEQAGATASTGPDGGGRTSGAPGEETVEGEYREV</sequence>
<organism>
    <name type="scientific">Thermomicrobium roseum (strain ATCC 27502 / DSM 5159 / P-2)</name>
    <dbReference type="NCBI Taxonomy" id="309801"/>
    <lineage>
        <taxon>Bacteria</taxon>
        <taxon>Pseudomonadati</taxon>
        <taxon>Thermomicrobiota</taxon>
        <taxon>Thermomicrobia</taxon>
        <taxon>Thermomicrobiales</taxon>
        <taxon>Thermomicrobiaceae</taxon>
        <taxon>Thermomicrobium</taxon>
    </lineage>
</organism>
<reference key="1">
    <citation type="journal article" date="1997" name="J. Bacteriol.">
        <title>Sequencing of heat shock protein 70 (DnaK) homologs from Deinococcus proteolyticus and Thermomicrobium roseum and their integration in a protein-based phylogeny of prokaryotes.</title>
        <authorList>
            <person name="Gupta R.S."/>
            <person name="Bustard K."/>
            <person name="Falah M."/>
            <person name="Singh D."/>
        </authorList>
    </citation>
    <scope>NUCLEOTIDE SEQUENCE [GENOMIC DNA]</scope>
</reference>
<reference key="2">
    <citation type="journal article" date="2009" name="PLoS ONE">
        <title>Complete genome sequence of the aerobic CO-oxidizing thermophile Thermomicrobium roseum.</title>
        <authorList>
            <person name="Wu D."/>
            <person name="Raymond J."/>
            <person name="Wu M."/>
            <person name="Chatterji S."/>
            <person name="Ren Q."/>
            <person name="Graham J.E."/>
            <person name="Bryant D.A."/>
            <person name="Robb F."/>
            <person name="Colman A."/>
            <person name="Tallon L.J."/>
            <person name="Badger J.H."/>
            <person name="Madupu R."/>
            <person name="Ward N.L."/>
            <person name="Eisen J.A."/>
        </authorList>
    </citation>
    <scope>NUCLEOTIDE SEQUENCE [LARGE SCALE GENOMIC DNA]</scope>
    <source>
        <strain>ATCC 27502 / DSM 5159 / P-2</strain>
    </source>
</reference>
<accession>P96133</accession>
<accession>B9L0E7</accession>
<feature type="chain" id="PRO_0000078573" description="Chaperone protein DnaK">
    <location>
        <begin position="1"/>
        <end position="633"/>
    </location>
</feature>
<feature type="region of interest" description="Disordered" evidence="2">
    <location>
        <begin position="601"/>
        <end position="633"/>
    </location>
</feature>
<feature type="modified residue" description="Phosphothreonine; by autocatalysis" evidence="1">
    <location>
        <position position="198"/>
    </location>
</feature>
<feature type="sequence conflict" description="In Ref. 1; AAB41740." evidence="3" ref="1">
    <original>N</original>
    <variation>T</variation>
    <location>
        <position position="29"/>
    </location>
</feature>
<feature type="sequence conflict" description="In Ref. 1; AAB41740." evidence="3" ref="1">
    <original>PT</original>
    <variation>R</variation>
    <location>
        <begin position="44"/>
        <end position="45"/>
    </location>
</feature>
<feature type="sequence conflict" description="In Ref. 1; AAB41740." evidence="3" ref="1">
    <original>E</original>
    <variation>A</variation>
    <location>
        <position position="102"/>
    </location>
</feature>
<feature type="sequence conflict" description="In Ref. 1; AAB41740." evidence="3" ref="1">
    <original>DRW</original>
    <variation>ERS</variation>
    <location>
        <begin position="107"/>
        <end position="109"/>
    </location>
</feature>
<feature type="sequence conflict" description="In Ref. 1; AAB41740." evidence="3" ref="1">
    <original>L</original>
    <variation>R</variation>
    <location>
        <position position="166"/>
    </location>
</feature>
<feature type="sequence conflict" description="In Ref. 1; AAB41740." evidence="3" ref="1">
    <original>EEKVA</original>
    <variation>RGEGG</variation>
    <location>
        <begin position="186"/>
        <end position="190"/>
    </location>
</feature>
<feature type="sequence conflict" description="In Ref. 1; AAB41740." evidence="3" ref="1">
    <original>DTHLGGDD</original>
    <variation>YTHTPLVH</variation>
    <location>
        <begin position="219"/>
        <end position="226"/>
    </location>
</feature>
<feature type="sequence conflict" description="In Ref. 1; AAB41740." evidence="3" ref="1">
    <original>R</original>
    <variation>A</variation>
    <location>
        <position position="230"/>
    </location>
</feature>
<feature type="sequence conflict" description="In Ref. 1; AAB41740." evidence="3" ref="1">
    <original>WLCD</original>
    <variation>LALH</variation>
    <location>
        <begin position="234"/>
        <end position="237"/>
    </location>
</feature>
<feature type="sequence conflict" description="In Ref. 1; AAB41740." evidence="3" ref="1">
    <original>MAL</original>
    <variation>IV</variation>
    <location>
        <begin position="252"/>
        <end position="254"/>
    </location>
</feature>
<feature type="sequence conflict" description="In Ref. 1; AAB41740." evidence="3" ref="1">
    <original>VKT</original>
    <variation>TVK</variation>
    <location>
        <begin position="292"/>
        <end position="294"/>
    </location>
</feature>
<feature type="sequence conflict" description="In Ref. 1; AAB41740." evidence="3" ref="1">
    <original>SKLEQ</original>
    <variation>ARLQAE</variation>
    <location>
        <begin position="298"/>
        <end position="302"/>
    </location>
</feature>
<feature type="sequence conflict" description="In Ref. 1; AAB41740." evidence="3" ref="1">
    <original>R</original>
    <variation>A</variation>
    <location>
        <position position="523"/>
    </location>
</feature>
<feature type="sequence conflict" description="In Ref. 1; AAB41740." evidence="3" ref="1">
    <original>EL</original>
    <variation>DV</variation>
    <location>
        <begin position="529"/>
        <end position="530"/>
    </location>
</feature>
<feature type="sequence conflict" description="In Ref. 1; AAB41740." evidence="3" ref="1">
    <original>PAYDELARTLSQVGARMYEQAGA</original>
    <variation>GLRRAGADPLPGRRPHVRAGPAP</variation>
    <location>
        <begin position="583"/>
        <end position="605"/>
    </location>
</feature>
<feature type="sequence conflict" description="In Ref. 1; AAB41740." evidence="3" ref="1">
    <location>
        <position position="615"/>
    </location>
</feature>
<evidence type="ECO:0000250" key="1"/>
<evidence type="ECO:0000256" key="2">
    <source>
        <dbReference type="SAM" id="MobiDB-lite"/>
    </source>
</evidence>
<evidence type="ECO:0000305" key="3"/>
<comment type="function">
    <text evidence="1">Acts as a chaperone.</text>
</comment>
<comment type="induction">
    <text evidence="1">By stress conditions e.g. heat shock (By similarity).</text>
</comment>
<comment type="similarity">
    <text evidence="3">Belongs to the heat shock protein 70 family.</text>
</comment>